<feature type="chain" id="PRO_0000095472" description="Glutamate racemase">
    <location>
        <begin position="1"/>
        <end position="285"/>
    </location>
</feature>
<feature type="active site" description="Proton donor/acceptor" evidence="1">
    <location>
        <position position="92"/>
    </location>
</feature>
<feature type="active site" description="Proton donor/acceptor" evidence="1">
    <location>
        <position position="204"/>
    </location>
</feature>
<feature type="binding site" evidence="1">
    <location>
        <begin position="28"/>
        <end position="29"/>
    </location>
    <ligand>
        <name>substrate</name>
    </ligand>
</feature>
<feature type="binding site" evidence="1">
    <location>
        <begin position="60"/>
        <end position="61"/>
    </location>
    <ligand>
        <name>substrate</name>
    </ligand>
</feature>
<feature type="binding site" evidence="1">
    <location>
        <begin position="93"/>
        <end position="94"/>
    </location>
    <ligand>
        <name>substrate</name>
    </ligand>
</feature>
<feature type="binding site" evidence="1">
    <location>
        <begin position="205"/>
        <end position="206"/>
    </location>
    <ligand>
        <name>substrate</name>
    </ligand>
</feature>
<name>MURI_ECO57</name>
<reference key="1">
    <citation type="journal article" date="2001" name="Nature">
        <title>Genome sequence of enterohaemorrhagic Escherichia coli O157:H7.</title>
        <authorList>
            <person name="Perna N.T."/>
            <person name="Plunkett G. III"/>
            <person name="Burland V."/>
            <person name="Mau B."/>
            <person name="Glasner J.D."/>
            <person name="Rose D.J."/>
            <person name="Mayhew G.F."/>
            <person name="Evans P.S."/>
            <person name="Gregor J."/>
            <person name="Kirkpatrick H.A."/>
            <person name="Posfai G."/>
            <person name="Hackett J."/>
            <person name="Klink S."/>
            <person name="Boutin A."/>
            <person name="Shao Y."/>
            <person name="Miller L."/>
            <person name="Grotbeck E.J."/>
            <person name="Davis N.W."/>
            <person name="Lim A."/>
            <person name="Dimalanta E.T."/>
            <person name="Potamousis K."/>
            <person name="Apodaca J."/>
            <person name="Anantharaman T.S."/>
            <person name="Lin J."/>
            <person name="Yen G."/>
            <person name="Schwartz D.C."/>
            <person name="Welch R.A."/>
            <person name="Blattner F.R."/>
        </authorList>
    </citation>
    <scope>NUCLEOTIDE SEQUENCE [LARGE SCALE GENOMIC DNA]</scope>
    <source>
        <strain>O157:H7 / EDL933 / ATCC 700927 / EHEC</strain>
    </source>
</reference>
<reference key="2">
    <citation type="journal article" date="2001" name="DNA Res.">
        <title>Complete genome sequence of enterohemorrhagic Escherichia coli O157:H7 and genomic comparison with a laboratory strain K-12.</title>
        <authorList>
            <person name="Hayashi T."/>
            <person name="Makino K."/>
            <person name="Ohnishi M."/>
            <person name="Kurokawa K."/>
            <person name="Ishii K."/>
            <person name="Yokoyama K."/>
            <person name="Han C.-G."/>
            <person name="Ohtsubo E."/>
            <person name="Nakayama K."/>
            <person name="Murata T."/>
            <person name="Tanaka M."/>
            <person name="Tobe T."/>
            <person name="Iida T."/>
            <person name="Takami H."/>
            <person name="Honda T."/>
            <person name="Sasakawa C."/>
            <person name="Ogasawara N."/>
            <person name="Yasunaga T."/>
            <person name="Kuhara S."/>
            <person name="Shiba T."/>
            <person name="Hattori M."/>
            <person name="Shinagawa H."/>
        </authorList>
    </citation>
    <scope>NUCLEOTIDE SEQUENCE [LARGE SCALE GENOMIC DNA]</scope>
    <source>
        <strain>O157:H7 / Sakai / RIMD 0509952 / EHEC</strain>
    </source>
</reference>
<organism>
    <name type="scientific">Escherichia coli O157:H7</name>
    <dbReference type="NCBI Taxonomy" id="83334"/>
    <lineage>
        <taxon>Bacteria</taxon>
        <taxon>Pseudomonadati</taxon>
        <taxon>Pseudomonadota</taxon>
        <taxon>Gammaproteobacteria</taxon>
        <taxon>Enterobacterales</taxon>
        <taxon>Enterobacteriaceae</taxon>
        <taxon>Escherichia</taxon>
    </lineage>
</organism>
<proteinExistence type="inferred from homology"/>
<comment type="function">
    <text evidence="1">Provides the (R)-glutamate required for cell wall biosynthesis.</text>
</comment>
<comment type="catalytic activity">
    <reaction evidence="1">
        <text>L-glutamate = D-glutamate</text>
        <dbReference type="Rhea" id="RHEA:12813"/>
        <dbReference type="ChEBI" id="CHEBI:29985"/>
        <dbReference type="ChEBI" id="CHEBI:29986"/>
        <dbReference type="EC" id="5.1.1.3"/>
    </reaction>
</comment>
<comment type="pathway">
    <text evidence="1">Cell wall biogenesis; peptidoglycan biosynthesis.</text>
</comment>
<comment type="similarity">
    <text evidence="1">Belongs to the aspartate/glutamate racemases family.</text>
</comment>
<comment type="sequence caution" evidence="2">
    <conflict type="erroneous initiation">
        <sequence resource="EMBL-CDS" id="AAG59171"/>
    </conflict>
    <text>Extended N-terminus.</text>
</comment>
<accession>P63633</accession>
<accession>Q8X713</accession>
<gene>
    <name evidence="1" type="primary">murI</name>
    <name type="ordered locus">Z5528</name>
    <name type="ordered locus">ECs4898</name>
</gene>
<dbReference type="EC" id="5.1.1.3" evidence="1"/>
<dbReference type="EMBL" id="AE005174">
    <property type="protein sequence ID" value="AAG59171.1"/>
    <property type="status" value="ALT_INIT"/>
    <property type="molecule type" value="Genomic_DNA"/>
</dbReference>
<dbReference type="EMBL" id="BA000007">
    <property type="protein sequence ID" value="BAB38321.2"/>
    <property type="molecule type" value="Genomic_DNA"/>
</dbReference>
<dbReference type="PIR" id="B91241">
    <property type="entry name" value="B91241"/>
</dbReference>
<dbReference type="PIR" id="G86088">
    <property type="entry name" value="G86088"/>
</dbReference>
<dbReference type="RefSeq" id="NP_312925.2">
    <property type="nucleotide sequence ID" value="NC_002695.1"/>
</dbReference>
<dbReference type="RefSeq" id="WP_000201819.1">
    <property type="nucleotide sequence ID" value="NZ_VOAI01000032.1"/>
</dbReference>
<dbReference type="SMR" id="P63633"/>
<dbReference type="STRING" id="155864.Z5528"/>
<dbReference type="GeneID" id="914973"/>
<dbReference type="GeneID" id="93777926"/>
<dbReference type="KEGG" id="ece:Z5528"/>
<dbReference type="KEGG" id="ecs:ECs_4898"/>
<dbReference type="PATRIC" id="fig|386585.9.peg.5122"/>
<dbReference type="eggNOG" id="COG0796">
    <property type="taxonomic scope" value="Bacteria"/>
</dbReference>
<dbReference type="HOGENOM" id="CLU_052344_2_0_6"/>
<dbReference type="OMA" id="LDFFKPH"/>
<dbReference type="UniPathway" id="UPA00219"/>
<dbReference type="Proteomes" id="UP000000558">
    <property type="component" value="Chromosome"/>
</dbReference>
<dbReference type="Proteomes" id="UP000002519">
    <property type="component" value="Chromosome"/>
</dbReference>
<dbReference type="GO" id="GO:0008881">
    <property type="term" value="F:glutamate racemase activity"/>
    <property type="evidence" value="ECO:0007669"/>
    <property type="project" value="UniProtKB-UniRule"/>
</dbReference>
<dbReference type="GO" id="GO:0071555">
    <property type="term" value="P:cell wall organization"/>
    <property type="evidence" value="ECO:0007669"/>
    <property type="project" value="UniProtKB-KW"/>
</dbReference>
<dbReference type="GO" id="GO:0009252">
    <property type="term" value="P:peptidoglycan biosynthetic process"/>
    <property type="evidence" value="ECO:0007669"/>
    <property type="project" value="UniProtKB-UniRule"/>
</dbReference>
<dbReference type="GO" id="GO:0008360">
    <property type="term" value="P:regulation of cell shape"/>
    <property type="evidence" value="ECO:0007669"/>
    <property type="project" value="UniProtKB-KW"/>
</dbReference>
<dbReference type="FunFam" id="3.40.50.1860:FF:000002">
    <property type="entry name" value="Glutamate racemase"/>
    <property type="match status" value="1"/>
</dbReference>
<dbReference type="Gene3D" id="3.40.50.1860">
    <property type="match status" value="2"/>
</dbReference>
<dbReference type="HAMAP" id="MF_00258">
    <property type="entry name" value="Glu_racemase"/>
    <property type="match status" value="1"/>
</dbReference>
<dbReference type="InterPro" id="IPR015942">
    <property type="entry name" value="Asp/Glu/hydantoin_racemase"/>
</dbReference>
<dbReference type="InterPro" id="IPR001920">
    <property type="entry name" value="Asp/Glu_race"/>
</dbReference>
<dbReference type="InterPro" id="IPR018187">
    <property type="entry name" value="Asp/Glu_racemase_AS_1"/>
</dbReference>
<dbReference type="InterPro" id="IPR033134">
    <property type="entry name" value="Asp/Glu_racemase_AS_2"/>
</dbReference>
<dbReference type="InterPro" id="IPR004391">
    <property type="entry name" value="Glu_race"/>
</dbReference>
<dbReference type="NCBIfam" id="TIGR00067">
    <property type="entry name" value="glut_race"/>
    <property type="match status" value="1"/>
</dbReference>
<dbReference type="NCBIfam" id="NF002034">
    <property type="entry name" value="PRK00865.1-1"/>
    <property type="match status" value="1"/>
</dbReference>
<dbReference type="PANTHER" id="PTHR21198">
    <property type="entry name" value="GLUTAMATE RACEMASE"/>
    <property type="match status" value="1"/>
</dbReference>
<dbReference type="PANTHER" id="PTHR21198:SF2">
    <property type="entry name" value="GLUTAMATE RACEMASE"/>
    <property type="match status" value="1"/>
</dbReference>
<dbReference type="Pfam" id="PF01177">
    <property type="entry name" value="Asp_Glu_race"/>
    <property type="match status" value="1"/>
</dbReference>
<dbReference type="SUPFAM" id="SSF53681">
    <property type="entry name" value="Aspartate/glutamate racemase"/>
    <property type="match status" value="2"/>
</dbReference>
<dbReference type="PROSITE" id="PS00923">
    <property type="entry name" value="ASP_GLU_RACEMASE_1"/>
    <property type="match status" value="1"/>
</dbReference>
<dbReference type="PROSITE" id="PS00924">
    <property type="entry name" value="ASP_GLU_RACEMASE_2"/>
    <property type="match status" value="1"/>
</dbReference>
<keyword id="KW-0133">Cell shape</keyword>
<keyword id="KW-0961">Cell wall biogenesis/degradation</keyword>
<keyword id="KW-0413">Isomerase</keyword>
<keyword id="KW-0573">Peptidoglycan synthesis</keyword>
<keyword id="KW-1185">Reference proteome</keyword>
<evidence type="ECO:0000255" key="1">
    <source>
        <dbReference type="HAMAP-Rule" id="MF_00258"/>
    </source>
</evidence>
<evidence type="ECO:0000305" key="2"/>
<protein>
    <recommendedName>
        <fullName evidence="1">Glutamate racemase</fullName>
        <ecNumber evidence="1">5.1.1.3</ecNumber>
    </recommendedName>
</protein>
<sequence length="285" mass="31074">MATKLQDGNTPCLAATPSEPRPTVLVFDSGVGGLSVYDEIRHLLPDLHYIYAFDNVAFPYGEKSEAFIVERVVAIVTAVQERYPLALAVVACNTASTVSLPALREKFDFPVVGVVPAIKPAARLTANGIVGLLATRGTVKRSYTHELIARFANECQIEMLGSAEMVELAEAKLHGEDVSLDALKRILRPWLRMKEPPDTVVLGCTHFPLLQEELLQVLPEGTRLVDSGAAIARRTAWLLEHEAPDAKSADANIAFCMAMTPEAEQLLPVLQRYGFETLEKLAVLG</sequence>